<organism>
    <name type="scientific">Homo sapiens</name>
    <name type="common">Human</name>
    <dbReference type="NCBI Taxonomy" id="9606"/>
    <lineage>
        <taxon>Eukaryota</taxon>
        <taxon>Metazoa</taxon>
        <taxon>Chordata</taxon>
        <taxon>Craniata</taxon>
        <taxon>Vertebrata</taxon>
        <taxon>Euteleostomi</taxon>
        <taxon>Mammalia</taxon>
        <taxon>Eutheria</taxon>
        <taxon>Euarchontoglires</taxon>
        <taxon>Primates</taxon>
        <taxon>Haplorrhini</taxon>
        <taxon>Catarrhini</taxon>
        <taxon>Hominidae</taxon>
        <taxon>Homo</taxon>
    </lineage>
</organism>
<accession>Q96JC4</accession>
<reference key="1">
    <citation type="journal article" date="2001" name="DNA Cell Biol.">
        <title>Molecular cloning and preliminary functional analysis of two novel human KRAB zinc finger proteins, HKr18 and HKr19.</title>
        <authorList>
            <person name="Mark C."/>
            <person name="Looman C."/>
            <person name="Abrink M."/>
            <person name="Hellman L."/>
        </authorList>
    </citation>
    <scope>NUCLEOTIDE SEQUENCE [MRNA]</scope>
    <scope>TISSUE SPECIFICITY</scope>
    <source>
        <tissue>Testis</tissue>
    </source>
</reference>
<protein>
    <recommendedName>
        <fullName>Zinc finger protein 479</fullName>
    </recommendedName>
    <alternativeName>
        <fullName>Zinc finger protein Kr19</fullName>
        <shortName>HKr19</shortName>
    </alternativeName>
</protein>
<dbReference type="EMBL" id="AF277624">
    <property type="protein sequence ID" value="AAK61307.1"/>
    <property type="molecule type" value="mRNA"/>
</dbReference>
<dbReference type="CCDS" id="CCDS43590.1"/>
<dbReference type="RefSeq" id="NP_001357058.1">
    <property type="nucleotide sequence ID" value="NM_001370129.2"/>
</dbReference>
<dbReference type="RefSeq" id="NP_150376.1">
    <property type="nucleotide sequence ID" value="NM_033273.3"/>
</dbReference>
<dbReference type="RefSeq" id="XP_011513906.1">
    <property type="nucleotide sequence ID" value="XM_011515604.2"/>
</dbReference>
<dbReference type="RefSeq" id="XP_011513910.1">
    <property type="nucleotide sequence ID" value="XM_011515608.2"/>
</dbReference>
<dbReference type="RefSeq" id="XP_016868266.1">
    <property type="nucleotide sequence ID" value="XM_017012777.1"/>
</dbReference>
<dbReference type="SMR" id="Q96JC4"/>
<dbReference type="BioGRID" id="124767">
    <property type="interactions" value="7"/>
</dbReference>
<dbReference type="FunCoup" id="Q96JC4">
    <property type="interactions" value="7"/>
</dbReference>
<dbReference type="IntAct" id="Q96JC4">
    <property type="interactions" value="14"/>
</dbReference>
<dbReference type="STRING" id="9606.ENSP00000333776"/>
<dbReference type="iPTMnet" id="Q96JC4"/>
<dbReference type="PhosphoSitePlus" id="Q96JC4"/>
<dbReference type="BioMuta" id="ZNF479"/>
<dbReference type="DMDM" id="38258829"/>
<dbReference type="jPOST" id="Q96JC4"/>
<dbReference type="MassIVE" id="Q96JC4"/>
<dbReference type="PaxDb" id="9606-ENSP00000333776"/>
<dbReference type="PeptideAtlas" id="Q96JC4"/>
<dbReference type="ProteomicsDB" id="76941"/>
<dbReference type="Antibodypedia" id="67579">
    <property type="antibodies" value="51 antibodies from 9 providers"/>
</dbReference>
<dbReference type="DNASU" id="90827"/>
<dbReference type="Ensembl" id="ENST00000319636.10">
    <property type="protein sequence ID" value="ENSP00000324518.6"/>
    <property type="gene ID" value="ENSG00000185177.14"/>
</dbReference>
<dbReference type="Ensembl" id="ENST00000331162.8">
    <property type="protein sequence ID" value="ENSP00000333776.4"/>
    <property type="gene ID" value="ENSG00000185177.14"/>
</dbReference>
<dbReference type="GeneID" id="90827"/>
<dbReference type="KEGG" id="hsa:90827"/>
<dbReference type="MANE-Select" id="ENST00000319636.10">
    <property type="protein sequence ID" value="ENSP00000324518.6"/>
    <property type="RefSeq nucleotide sequence ID" value="NM_001370129.2"/>
    <property type="RefSeq protein sequence ID" value="NP_001357058.1"/>
</dbReference>
<dbReference type="UCSC" id="uc010kzo.4">
    <property type="organism name" value="human"/>
</dbReference>
<dbReference type="AGR" id="HGNC:23258"/>
<dbReference type="CTD" id="90827"/>
<dbReference type="DisGeNET" id="90827"/>
<dbReference type="GeneCards" id="ZNF479"/>
<dbReference type="HGNC" id="HGNC:23258">
    <property type="gene designation" value="ZNF479"/>
</dbReference>
<dbReference type="HPA" id="ENSG00000185177">
    <property type="expression patterns" value="Tissue enriched (testis)"/>
</dbReference>
<dbReference type="MIM" id="617444">
    <property type="type" value="gene"/>
</dbReference>
<dbReference type="neXtProt" id="NX_Q96JC4"/>
<dbReference type="PharmGKB" id="PA134903704"/>
<dbReference type="VEuPathDB" id="HostDB:ENSG00000185177"/>
<dbReference type="eggNOG" id="KOG1721">
    <property type="taxonomic scope" value="Eukaryota"/>
</dbReference>
<dbReference type="GeneTree" id="ENSGT01130000278311"/>
<dbReference type="HOGENOM" id="CLU_002678_44_0_1"/>
<dbReference type="InParanoid" id="Q96JC4"/>
<dbReference type="OMA" id="HCTTHKR"/>
<dbReference type="OrthoDB" id="1095242at2759"/>
<dbReference type="PAN-GO" id="Q96JC4">
    <property type="GO annotations" value="3 GO annotations based on evolutionary models"/>
</dbReference>
<dbReference type="PhylomeDB" id="Q96JC4"/>
<dbReference type="TreeFam" id="TF342117"/>
<dbReference type="PathwayCommons" id="Q96JC4"/>
<dbReference type="Reactome" id="R-HSA-212436">
    <property type="pathway name" value="Generic Transcription Pathway"/>
</dbReference>
<dbReference type="SignaLink" id="Q96JC4"/>
<dbReference type="BioGRID-ORCS" id="90827">
    <property type="hits" value="34 hits in 1084 CRISPR screens"/>
</dbReference>
<dbReference type="ChiTaRS" id="ZNF479">
    <property type="organism name" value="human"/>
</dbReference>
<dbReference type="GenomeRNAi" id="90827"/>
<dbReference type="Pharos" id="Q96JC4">
    <property type="development level" value="Tbio"/>
</dbReference>
<dbReference type="PRO" id="PR:Q96JC4"/>
<dbReference type="Proteomes" id="UP000005640">
    <property type="component" value="Chromosome 7"/>
</dbReference>
<dbReference type="RNAct" id="Q96JC4">
    <property type="molecule type" value="protein"/>
</dbReference>
<dbReference type="Bgee" id="ENSG00000185177">
    <property type="expression patterns" value="Expressed in buccal mucosa cell and 6 other cell types or tissues"/>
</dbReference>
<dbReference type="GO" id="GO:0005634">
    <property type="term" value="C:nucleus"/>
    <property type="evidence" value="ECO:0007669"/>
    <property type="project" value="UniProtKB-SubCell"/>
</dbReference>
<dbReference type="GO" id="GO:0000981">
    <property type="term" value="F:DNA-binding transcription factor activity, RNA polymerase II-specific"/>
    <property type="evidence" value="ECO:0000318"/>
    <property type="project" value="GO_Central"/>
</dbReference>
<dbReference type="GO" id="GO:0000978">
    <property type="term" value="F:RNA polymerase II cis-regulatory region sequence-specific DNA binding"/>
    <property type="evidence" value="ECO:0000318"/>
    <property type="project" value="GO_Central"/>
</dbReference>
<dbReference type="GO" id="GO:0008270">
    <property type="term" value="F:zinc ion binding"/>
    <property type="evidence" value="ECO:0007669"/>
    <property type="project" value="UniProtKB-KW"/>
</dbReference>
<dbReference type="GO" id="GO:0006355">
    <property type="term" value="P:regulation of DNA-templated transcription"/>
    <property type="evidence" value="ECO:0000318"/>
    <property type="project" value="GO_Central"/>
</dbReference>
<dbReference type="CDD" id="cd07765">
    <property type="entry name" value="KRAB_A-box"/>
    <property type="match status" value="1"/>
</dbReference>
<dbReference type="FunFam" id="3.30.160.60:FF:004135">
    <property type="match status" value="1"/>
</dbReference>
<dbReference type="FunFam" id="3.30.160.60:FF:001737">
    <property type="entry name" value="Zinc finger protein 100"/>
    <property type="match status" value="1"/>
</dbReference>
<dbReference type="FunFam" id="3.30.160.60:FF:000034">
    <property type="entry name" value="zinc finger protein 25"/>
    <property type="match status" value="4"/>
</dbReference>
<dbReference type="FunFam" id="3.30.160.60:FF:001868">
    <property type="entry name" value="Zinc finger protein 264"/>
    <property type="match status" value="1"/>
</dbReference>
<dbReference type="FunFam" id="3.30.160.60:FF:000120">
    <property type="entry name" value="Zinc finger protein 430"/>
    <property type="match status" value="1"/>
</dbReference>
<dbReference type="FunFam" id="3.30.160.60:FF:000238">
    <property type="entry name" value="Zinc finger protein 485"/>
    <property type="match status" value="1"/>
</dbReference>
<dbReference type="FunFam" id="3.30.160.60:FF:000362">
    <property type="entry name" value="Zinc finger protein 606"/>
    <property type="match status" value="1"/>
</dbReference>
<dbReference type="FunFam" id="3.30.160.60:FF:000011">
    <property type="entry name" value="zinc finger protein 615 isoform X1"/>
    <property type="match status" value="1"/>
</dbReference>
<dbReference type="Gene3D" id="6.10.140.140">
    <property type="match status" value="1"/>
</dbReference>
<dbReference type="Gene3D" id="3.30.160.60">
    <property type="entry name" value="Classic Zinc Finger"/>
    <property type="match status" value="12"/>
</dbReference>
<dbReference type="InterPro" id="IPR001909">
    <property type="entry name" value="KRAB"/>
</dbReference>
<dbReference type="InterPro" id="IPR036051">
    <property type="entry name" value="KRAB_dom_sf"/>
</dbReference>
<dbReference type="InterPro" id="IPR050758">
    <property type="entry name" value="Znf_C2H2-type"/>
</dbReference>
<dbReference type="InterPro" id="IPR036236">
    <property type="entry name" value="Znf_C2H2_sf"/>
</dbReference>
<dbReference type="InterPro" id="IPR013087">
    <property type="entry name" value="Znf_C2H2_type"/>
</dbReference>
<dbReference type="PANTHER" id="PTHR23234:SF10">
    <property type="entry name" value="RIKEN CDNA 6720489N17 GENE-RELATED"/>
    <property type="match status" value="1"/>
</dbReference>
<dbReference type="PANTHER" id="PTHR23234">
    <property type="entry name" value="ZNF44 PROTEIN"/>
    <property type="match status" value="1"/>
</dbReference>
<dbReference type="Pfam" id="PF01352">
    <property type="entry name" value="KRAB"/>
    <property type="match status" value="1"/>
</dbReference>
<dbReference type="Pfam" id="PF00096">
    <property type="entry name" value="zf-C2H2"/>
    <property type="match status" value="9"/>
</dbReference>
<dbReference type="SMART" id="SM00349">
    <property type="entry name" value="KRAB"/>
    <property type="match status" value="1"/>
</dbReference>
<dbReference type="SMART" id="SM00355">
    <property type="entry name" value="ZnF_C2H2"/>
    <property type="match status" value="12"/>
</dbReference>
<dbReference type="SUPFAM" id="SSF57667">
    <property type="entry name" value="beta-beta-alpha zinc fingers"/>
    <property type="match status" value="8"/>
</dbReference>
<dbReference type="SUPFAM" id="SSF109640">
    <property type="entry name" value="KRAB domain (Kruppel-associated box)"/>
    <property type="match status" value="1"/>
</dbReference>
<dbReference type="PROSITE" id="PS50805">
    <property type="entry name" value="KRAB"/>
    <property type="match status" value="1"/>
</dbReference>
<dbReference type="PROSITE" id="PS00028">
    <property type="entry name" value="ZINC_FINGER_C2H2_1"/>
    <property type="match status" value="11"/>
</dbReference>
<dbReference type="PROSITE" id="PS50157">
    <property type="entry name" value="ZINC_FINGER_C2H2_2"/>
    <property type="match status" value="12"/>
</dbReference>
<evidence type="ECO:0000255" key="1">
    <source>
        <dbReference type="PROSITE-ProRule" id="PRU00042"/>
    </source>
</evidence>
<evidence type="ECO:0000255" key="2">
    <source>
        <dbReference type="PROSITE-ProRule" id="PRU00119"/>
    </source>
</evidence>
<evidence type="ECO:0000269" key="3">
    <source>
    </source>
</evidence>
<evidence type="ECO:0000305" key="4"/>
<sequence>MAKRPGPPGSREMGLLTFRDIAIEFSLEEWQCLDCAQRNLYRDVMLENYRNLVSLGIAVSKPDLITCLEQNKESQNIKRNEMVAKHPVTRSHFTQDLQPEQGIKDSLQKVIPRTYGKCGHEKLQFKKCCKSVGEYEVHKGGYSEVNQCLSTTQNKIFQTHKYVKVFGKFSNSNRDKTRYTGNKHFKCNKYGKSFCMLSHLNQHQVIHTREKSYKCKECGKSFNCSSNHTTHKIIHTGEKPYRCEECGKAFSWSANLTRHKRTHTGEKPYTCEECGQAFRRSSALTNHKRIHTGERPYKCEECGKAFSVSSTLTDHKRIHTGEKPCRCEECGKAFSWSSNLTRHKRIHTREKPYACEECGQAFSLSSNLMRHRRIHTGEKPYTCEECGQDFRRSSALTIHKRIHTGERPYKCEECGKVFSLSSTLTDHKRIHTGERPYKCEECGKAFSLSSTLTDHKRIHTGERPYTCEECGKAFNCSSTLMQHKRIHTGEKPYKCEECEQAFKWHSSLAKHKIIHTGEKPYKCE</sequence>
<comment type="function">
    <text>May be involved in transcriptional regulation.</text>
</comment>
<comment type="interaction">
    <interactant intactId="EBI-10820574">
        <id>Q96JC4</id>
    </interactant>
    <interactant intactId="EBI-5916454">
        <id>A6NEM1</id>
        <label>GOLGA6L9</label>
    </interactant>
    <organismsDiffer>false</organismsDiffer>
    <experiments>3</experiments>
</comment>
<comment type="interaction">
    <interactant intactId="EBI-10820574">
        <id>Q96JC4</id>
    </interactant>
    <interactant intactId="EBI-12012928">
        <id>P60371</id>
        <label>KRTAP10-6</label>
    </interactant>
    <organismsDiffer>false</organismsDiffer>
    <experiments>3</experiments>
</comment>
<comment type="interaction">
    <interactant intactId="EBI-10820574">
        <id>Q96JC4</id>
    </interactant>
    <interactant intactId="EBI-11987425">
        <id>Q6L8G8</id>
        <label>KRTAP5-7</label>
    </interactant>
    <organismsDiffer>false</organismsDiffer>
    <experiments>3</experiments>
</comment>
<comment type="interaction">
    <interactant intactId="EBI-10820574">
        <id>Q96JC4</id>
    </interactant>
    <interactant intactId="EBI-724076">
        <id>Q99750</id>
        <label>MDFI</label>
    </interactant>
    <organismsDiffer>false</organismsDiffer>
    <experiments>3</experiments>
</comment>
<comment type="interaction">
    <interactant intactId="EBI-10820574">
        <id>Q96JC4</id>
    </interactant>
    <interactant intactId="EBI-712466">
        <id>Q16623</id>
        <label>STX1A</label>
    </interactant>
    <organismsDiffer>false</organismsDiffer>
    <experiments>3</experiments>
</comment>
<comment type="subcellular location">
    <subcellularLocation>
        <location evidence="4">Nucleus</location>
    </subcellularLocation>
</comment>
<comment type="tissue specificity">
    <text evidence="3">Expressed primarily in testis and fetal tissues.</text>
</comment>
<comment type="similarity">
    <text evidence="4">Belongs to the krueppel C2H2-type zinc-finger protein family.</text>
</comment>
<proteinExistence type="evidence at protein level"/>
<name>ZN479_HUMAN</name>
<gene>
    <name type="primary">ZNF479</name>
</gene>
<keyword id="KW-0238">DNA-binding</keyword>
<keyword id="KW-0479">Metal-binding</keyword>
<keyword id="KW-0539">Nucleus</keyword>
<keyword id="KW-1185">Reference proteome</keyword>
<keyword id="KW-0677">Repeat</keyword>
<keyword id="KW-0804">Transcription</keyword>
<keyword id="KW-0805">Transcription regulation</keyword>
<keyword id="KW-0862">Zinc</keyword>
<keyword id="KW-0863">Zinc-finger</keyword>
<feature type="chain" id="PRO_0000047606" description="Zinc finger protein 479">
    <location>
        <begin position="1"/>
        <end position="524"/>
    </location>
</feature>
<feature type="domain" description="KRAB" evidence="2">
    <location>
        <begin position="16"/>
        <end position="87"/>
    </location>
</feature>
<feature type="zinc finger region" description="C2H2-type 1" evidence="1">
    <location>
        <begin position="185"/>
        <end position="212"/>
    </location>
</feature>
<feature type="zinc finger region" description="C2H2-type 2" evidence="1">
    <location>
        <begin position="213"/>
        <end position="235"/>
    </location>
</feature>
<feature type="zinc finger region" description="C2H2-type 3" evidence="1">
    <location>
        <begin position="241"/>
        <end position="263"/>
    </location>
</feature>
<feature type="zinc finger region" description="C2H2-type 4" evidence="1">
    <location>
        <begin position="269"/>
        <end position="291"/>
    </location>
</feature>
<feature type="zinc finger region" description="C2H2-type 5" evidence="1">
    <location>
        <begin position="297"/>
        <end position="319"/>
    </location>
</feature>
<feature type="zinc finger region" description="C2H2-type 6" evidence="1">
    <location>
        <begin position="325"/>
        <end position="347"/>
    </location>
</feature>
<feature type="zinc finger region" description="C2H2-type 7" evidence="1">
    <location>
        <begin position="353"/>
        <end position="375"/>
    </location>
</feature>
<feature type="zinc finger region" description="C2H2-type 8" evidence="1">
    <location>
        <begin position="381"/>
        <end position="403"/>
    </location>
</feature>
<feature type="zinc finger region" description="C2H2-type 9" evidence="1">
    <location>
        <begin position="409"/>
        <end position="431"/>
    </location>
</feature>
<feature type="zinc finger region" description="C2H2-type 10" evidence="1">
    <location>
        <begin position="437"/>
        <end position="459"/>
    </location>
</feature>
<feature type="zinc finger region" description="C2H2-type 11" evidence="1">
    <location>
        <begin position="465"/>
        <end position="487"/>
    </location>
</feature>
<feature type="zinc finger region" description="C2H2-type 12" evidence="1">
    <location>
        <begin position="493"/>
        <end position="515"/>
    </location>
</feature>